<dbReference type="EMBL" id="AJ884916">
    <property type="protein sequence ID" value="CAI58657.1"/>
    <property type="molecule type" value="mRNA"/>
</dbReference>
<dbReference type="RefSeq" id="NP_001012635.1">
    <property type="nucleotide sequence ID" value="NM_001012617.1"/>
</dbReference>
<dbReference type="SMR" id="Q5DUB2"/>
<dbReference type="FunCoup" id="Q5DUB2">
    <property type="interactions" value="88"/>
</dbReference>
<dbReference type="STRING" id="9615.ENSCAFP00000020552"/>
<dbReference type="GlyCosmos" id="Q5DUB2">
    <property type="glycosylation" value="3 sites, No reported glycans"/>
</dbReference>
<dbReference type="PaxDb" id="9612-ENSCAFP00000020552"/>
<dbReference type="Ensembl" id="ENSCAFT00030029652.1">
    <property type="protein sequence ID" value="ENSCAFP00030025835.1"/>
    <property type="gene ID" value="ENSCAFG00030016045.1"/>
</dbReference>
<dbReference type="Ensembl" id="ENSCAFT00845006466.1">
    <property type="protein sequence ID" value="ENSCAFP00845005144.1"/>
    <property type="gene ID" value="ENSCAFG00845003627.1"/>
</dbReference>
<dbReference type="GeneID" id="489020"/>
<dbReference type="KEGG" id="cfa:489020"/>
<dbReference type="CTD" id="6865"/>
<dbReference type="VEuPathDB" id="HostDB:ENSCAFG00845003627"/>
<dbReference type="VGNC" id="VGNC:47067">
    <property type="gene designation" value="TACR2"/>
</dbReference>
<dbReference type="eggNOG" id="KOG4219">
    <property type="taxonomic scope" value="Eukaryota"/>
</dbReference>
<dbReference type="GeneTree" id="ENSGT00940000155512"/>
<dbReference type="InParanoid" id="Q5DUB2"/>
<dbReference type="OrthoDB" id="5981855at2759"/>
<dbReference type="Reactome" id="R-CFA-380095">
    <property type="pathway name" value="Tachykinin receptors bind tachykinins"/>
</dbReference>
<dbReference type="Reactome" id="R-CFA-416476">
    <property type="pathway name" value="G alpha (q) signalling events"/>
</dbReference>
<dbReference type="Proteomes" id="UP000002254">
    <property type="component" value="Unplaced"/>
</dbReference>
<dbReference type="Proteomes" id="UP000694429">
    <property type="component" value="Chromosome 4"/>
</dbReference>
<dbReference type="Proteomes" id="UP000694542">
    <property type="component" value="Unplaced"/>
</dbReference>
<dbReference type="Proteomes" id="UP000805418">
    <property type="component" value="Chromosome 4"/>
</dbReference>
<dbReference type="GO" id="GO:0005886">
    <property type="term" value="C:plasma membrane"/>
    <property type="evidence" value="ECO:0000318"/>
    <property type="project" value="GO_Central"/>
</dbReference>
<dbReference type="GO" id="GO:0061827">
    <property type="term" value="C:sperm head"/>
    <property type="evidence" value="ECO:0007669"/>
    <property type="project" value="Ensembl"/>
</dbReference>
<dbReference type="GO" id="GO:0097225">
    <property type="term" value="C:sperm midpiece"/>
    <property type="evidence" value="ECO:0000318"/>
    <property type="project" value="GO_Central"/>
</dbReference>
<dbReference type="GO" id="GO:0016497">
    <property type="term" value="F:substance K receptor activity"/>
    <property type="evidence" value="ECO:0000318"/>
    <property type="project" value="GO_Central"/>
</dbReference>
<dbReference type="GO" id="GO:1902093">
    <property type="term" value="P:positive regulation of flagellated sperm motility"/>
    <property type="evidence" value="ECO:0000318"/>
    <property type="project" value="GO_Central"/>
</dbReference>
<dbReference type="GO" id="GO:0070472">
    <property type="term" value="P:regulation of uterine smooth muscle contraction"/>
    <property type="evidence" value="ECO:0007669"/>
    <property type="project" value="Ensembl"/>
</dbReference>
<dbReference type="CDD" id="cd16004">
    <property type="entry name" value="7tmA_SKR_NK2R"/>
    <property type="match status" value="1"/>
</dbReference>
<dbReference type="FunFam" id="1.20.1070.10:FF:000224">
    <property type="entry name" value="Tachykinin receptor 2"/>
    <property type="match status" value="1"/>
</dbReference>
<dbReference type="Gene3D" id="1.20.1070.10">
    <property type="entry name" value="Rhodopsin 7-helix transmembrane proteins"/>
    <property type="match status" value="1"/>
</dbReference>
<dbReference type="InterPro" id="IPR000276">
    <property type="entry name" value="GPCR_Rhodpsn"/>
</dbReference>
<dbReference type="InterPro" id="IPR017452">
    <property type="entry name" value="GPCR_Rhodpsn_7TM"/>
</dbReference>
<dbReference type="InterPro" id="IPR001681">
    <property type="entry name" value="Neurokn_rcpt"/>
</dbReference>
<dbReference type="InterPro" id="IPR000913">
    <property type="entry name" value="NK2_rcpt"/>
</dbReference>
<dbReference type="PANTHER" id="PTHR46925">
    <property type="entry name" value="G-PROTEIN COUPLED RECEPTOR TKR-1-RELATED"/>
    <property type="match status" value="1"/>
</dbReference>
<dbReference type="PANTHER" id="PTHR46925:SF3">
    <property type="entry name" value="SUBSTANCE-K RECEPTOR"/>
    <property type="match status" value="1"/>
</dbReference>
<dbReference type="Pfam" id="PF00001">
    <property type="entry name" value="7tm_1"/>
    <property type="match status" value="1"/>
</dbReference>
<dbReference type="PRINTS" id="PR00237">
    <property type="entry name" value="GPCRRHODOPSN"/>
</dbReference>
<dbReference type="PRINTS" id="PR01025">
    <property type="entry name" value="NEUROKININ2R"/>
</dbReference>
<dbReference type="PRINTS" id="PR00244">
    <property type="entry name" value="NEUROKININR"/>
</dbReference>
<dbReference type="SMART" id="SM01381">
    <property type="entry name" value="7TM_GPCR_Srsx"/>
    <property type="match status" value="1"/>
</dbReference>
<dbReference type="SUPFAM" id="SSF81321">
    <property type="entry name" value="Family A G protein-coupled receptor-like"/>
    <property type="match status" value="1"/>
</dbReference>
<dbReference type="PROSITE" id="PS00237">
    <property type="entry name" value="G_PROTEIN_RECEP_F1_1"/>
    <property type="match status" value="1"/>
</dbReference>
<dbReference type="PROSITE" id="PS50262">
    <property type="entry name" value="G_PROTEIN_RECEP_F1_2"/>
    <property type="match status" value="1"/>
</dbReference>
<name>NK2R_CANLF</name>
<comment type="function">
    <text evidence="1">This is a receptor for the tachykinin neuropeptide substance K (neurokinin A). It is associated with G proteins that activate a phosphatidylinositol-calcium second messenger system (By similarity).</text>
</comment>
<comment type="subcellular location">
    <subcellularLocation>
        <location>Cell membrane</location>
        <topology>Multi-pass membrane protein</topology>
    </subcellularLocation>
</comment>
<comment type="similarity">
    <text evidence="3">Belongs to the G-protein coupled receptor 1 family.</text>
</comment>
<proteinExistence type="evidence at transcript level"/>
<organism>
    <name type="scientific">Canis lupus familiaris</name>
    <name type="common">Dog</name>
    <name type="synonym">Canis familiaris</name>
    <dbReference type="NCBI Taxonomy" id="9615"/>
    <lineage>
        <taxon>Eukaryota</taxon>
        <taxon>Metazoa</taxon>
        <taxon>Chordata</taxon>
        <taxon>Craniata</taxon>
        <taxon>Vertebrata</taxon>
        <taxon>Euteleostomi</taxon>
        <taxon>Mammalia</taxon>
        <taxon>Eutheria</taxon>
        <taxon>Laurasiatheria</taxon>
        <taxon>Carnivora</taxon>
        <taxon>Caniformia</taxon>
        <taxon>Canidae</taxon>
        <taxon>Canis</taxon>
    </lineage>
</organism>
<reference key="1">
    <citation type="submission" date="2005-02" db="EMBL/GenBank/DDBJ databases">
        <authorList>
            <person name="Engberg S."/>
            <person name="Drmota T."/>
        </authorList>
    </citation>
    <scope>NUCLEOTIDE SEQUENCE [MRNA]</scope>
</reference>
<feature type="chain" id="PRO_0000069891" description="Substance-K receptor">
    <location>
        <begin position="1"/>
        <end position="384"/>
    </location>
</feature>
<feature type="topological domain" description="Extracellular" evidence="2">
    <location>
        <begin position="1"/>
        <end position="32"/>
    </location>
</feature>
<feature type="transmembrane region" description="Helical; Name=1" evidence="2">
    <location>
        <begin position="33"/>
        <end position="56"/>
    </location>
</feature>
<feature type="topological domain" description="Cytoplasmic" evidence="2">
    <location>
        <begin position="57"/>
        <end position="69"/>
    </location>
</feature>
<feature type="transmembrane region" description="Helical; Name=2" evidence="2">
    <location>
        <begin position="70"/>
        <end position="90"/>
    </location>
</feature>
<feature type="topological domain" description="Extracellular" evidence="2">
    <location>
        <begin position="91"/>
        <end position="107"/>
    </location>
</feature>
<feature type="transmembrane region" description="Helical; Name=3" evidence="2">
    <location>
        <begin position="108"/>
        <end position="129"/>
    </location>
</feature>
<feature type="topological domain" description="Cytoplasmic" evidence="2">
    <location>
        <begin position="130"/>
        <end position="149"/>
    </location>
</feature>
<feature type="transmembrane region" description="Helical; Name=4" evidence="2">
    <location>
        <begin position="150"/>
        <end position="170"/>
    </location>
</feature>
<feature type="topological domain" description="Extracellular" evidence="2">
    <location>
        <begin position="171"/>
        <end position="196"/>
    </location>
</feature>
<feature type="transmembrane region" description="Helical; Name=5" evidence="2">
    <location>
        <begin position="197"/>
        <end position="218"/>
    </location>
</feature>
<feature type="topological domain" description="Cytoplasmic" evidence="2">
    <location>
        <begin position="219"/>
        <end position="251"/>
    </location>
</feature>
<feature type="transmembrane region" description="Helical; Name=6" evidence="2">
    <location>
        <begin position="252"/>
        <end position="272"/>
    </location>
</feature>
<feature type="topological domain" description="Extracellular" evidence="2">
    <location>
        <begin position="273"/>
        <end position="290"/>
    </location>
</feature>
<feature type="transmembrane region" description="Helical; Name=7" evidence="2">
    <location>
        <begin position="291"/>
        <end position="310"/>
    </location>
</feature>
<feature type="topological domain" description="Cytoplasmic" evidence="2">
    <location>
        <begin position="311"/>
        <end position="384"/>
    </location>
</feature>
<feature type="lipid moiety-binding region" description="S-palmitoyl cysteine" evidence="2">
    <location>
        <position position="324"/>
    </location>
</feature>
<feature type="glycosylation site" description="N-linked (GlcNAc...) asparagine" evidence="2">
    <location>
        <position position="11"/>
    </location>
</feature>
<feature type="glycosylation site" description="N-linked (GlcNAc...) asparagine" evidence="2">
    <location>
        <position position="18"/>
    </location>
</feature>
<feature type="glycosylation site" description="N-linked (GlcNAc...) asparagine" evidence="2">
    <location>
        <position position="19"/>
    </location>
</feature>
<feature type="disulfide bond" evidence="3">
    <location>
        <begin position="106"/>
        <end position="181"/>
    </location>
</feature>
<sequence>MGAHAIVTDANISSSLENNTTGITAFSMPGWQLALWATAYLVLVLVAVTGNATVIWIILAHQRMRTVTNYFIVNLALADLCMAAFNAAFNFVYASHNIWYFGRAFCHFQNLFPITAMFVSIYSMTAIAADRYVAIVHPFQPRLSAPGTRAVIAGIWLLALALAFPQCFYSTITMDQGATKCVVVWPEDNGSKMLLLYHLVVIALIYVLPLLVMLLAYSVIGLTLWRREVPRHQVHGASLRHLRAKKKFVKTMVLVVVTFAICWLPYHFYFILGSFQEDIYYHKFIQQVYLALFWLAMSSTMYNPIIYCCLNHRFRSGFRLAFRCCPWVTPTEEDKIELTHTPSLSARINRCHTKETFFMAGETALSPATNGQARGPQDGLPDEP</sequence>
<gene>
    <name type="primary">TACR2</name>
</gene>
<keyword id="KW-1003">Cell membrane</keyword>
<keyword id="KW-1015">Disulfide bond</keyword>
<keyword id="KW-0297">G-protein coupled receptor</keyword>
<keyword id="KW-0325">Glycoprotein</keyword>
<keyword id="KW-0449">Lipoprotein</keyword>
<keyword id="KW-0472">Membrane</keyword>
<keyword id="KW-0564">Palmitate</keyword>
<keyword id="KW-0675">Receptor</keyword>
<keyword id="KW-1185">Reference proteome</keyword>
<keyword id="KW-0807">Transducer</keyword>
<keyword id="KW-0812">Transmembrane</keyword>
<keyword id="KW-1133">Transmembrane helix</keyword>
<accession>Q5DUB2</accession>
<protein>
    <recommendedName>
        <fullName>Substance-K receptor</fullName>
        <shortName>SKR</shortName>
    </recommendedName>
    <alternativeName>
        <fullName>NK-2 receptor</fullName>
        <shortName>NK-2R</shortName>
    </alternativeName>
    <alternativeName>
        <fullName>Neurokinin A receptor</fullName>
    </alternativeName>
    <alternativeName>
        <fullName>Tachykinin receptor 2</fullName>
    </alternativeName>
</protein>
<evidence type="ECO:0000250" key="1"/>
<evidence type="ECO:0000255" key="2"/>
<evidence type="ECO:0000255" key="3">
    <source>
        <dbReference type="PROSITE-ProRule" id="PRU00521"/>
    </source>
</evidence>